<organism>
    <name type="scientific">Bacillus cereus (strain AH820)</name>
    <dbReference type="NCBI Taxonomy" id="405535"/>
    <lineage>
        <taxon>Bacteria</taxon>
        <taxon>Bacillati</taxon>
        <taxon>Bacillota</taxon>
        <taxon>Bacilli</taxon>
        <taxon>Bacillales</taxon>
        <taxon>Bacillaceae</taxon>
        <taxon>Bacillus</taxon>
        <taxon>Bacillus cereus group</taxon>
    </lineage>
</organism>
<feature type="chain" id="PRO_1000117603" description="Glutamyl-tRNA(Gln) amidotransferase subunit A">
    <location>
        <begin position="1"/>
        <end position="485"/>
    </location>
</feature>
<feature type="active site" description="Charge relay system" evidence="1">
    <location>
        <position position="78"/>
    </location>
</feature>
<feature type="active site" description="Charge relay system" evidence="1">
    <location>
        <position position="153"/>
    </location>
</feature>
<feature type="active site" description="Acyl-ester intermediate" evidence="1">
    <location>
        <position position="177"/>
    </location>
</feature>
<reference key="1">
    <citation type="submission" date="2008-10" db="EMBL/GenBank/DDBJ databases">
        <title>Genome sequence of Bacillus cereus AH820.</title>
        <authorList>
            <person name="Dodson R.J."/>
            <person name="Durkin A.S."/>
            <person name="Rosovitz M.J."/>
            <person name="Rasko D.A."/>
            <person name="Hoffmaster A."/>
            <person name="Ravel J."/>
            <person name="Sutton G."/>
        </authorList>
    </citation>
    <scope>NUCLEOTIDE SEQUENCE [LARGE SCALE GENOMIC DNA]</scope>
    <source>
        <strain>AH820</strain>
    </source>
</reference>
<protein>
    <recommendedName>
        <fullName evidence="1">Glutamyl-tRNA(Gln) amidotransferase subunit A</fullName>
        <shortName evidence="1">Glu-ADT subunit A</shortName>
        <ecNumber evidence="1">6.3.5.7</ecNumber>
    </recommendedName>
</protein>
<name>GATA_BACC0</name>
<dbReference type="EC" id="6.3.5.7" evidence="1"/>
<dbReference type="EMBL" id="CP001283">
    <property type="protein sequence ID" value="ACK88894.1"/>
    <property type="molecule type" value="Genomic_DNA"/>
</dbReference>
<dbReference type="RefSeq" id="WP_000051436.1">
    <property type="nucleotide sequence ID" value="NC_011773.1"/>
</dbReference>
<dbReference type="SMR" id="B7JMB2"/>
<dbReference type="KEGG" id="bcu:BCAH820_0353"/>
<dbReference type="HOGENOM" id="CLU_009600_0_3_9"/>
<dbReference type="Proteomes" id="UP000001363">
    <property type="component" value="Chromosome"/>
</dbReference>
<dbReference type="GO" id="GO:0030956">
    <property type="term" value="C:glutamyl-tRNA(Gln) amidotransferase complex"/>
    <property type="evidence" value="ECO:0007669"/>
    <property type="project" value="InterPro"/>
</dbReference>
<dbReference type="GO" id="GO:0005524">
    <property type="term" value="F:ATP binding"/>
    <property type="evidence" value="ECO:0007669"/>
    <property type="project" value="UniProtKB-KW"/>
</dbReference>
<dbReference type="GO" id="GO:0050567">
    <property type="term" value="F:glutaminyl-tRNA synthase (glutamine-hydrolyzing) activity"/>
    <property type="evidence" value="ECO:0007669"/>
    <property type="project" value="UniProtKB-UniRule"/>
</dbReference>
<dbReference type="GO" id="GO:0006412">
    <property type="term" value="P:translation"/>
    <property type="evidence" value="ECO:0007669"/>
    <property type="project" value="UniProtKB-UniRule"/>
</dbReference>
<dbReference type="Gene3D" id="3.90.1300.10">
    <property type="entry name" value="Amidase signature (AS) domain"/>
    <property type="match status" value="1"/>
</dbReference>
<dbReference type="HAMAP" id="MF_00120">
    <property type="entry name" value="GatA"/>
    <property type="match status" value="1"/>
</dbReference>
<dbReference type="InterPro" id="IPR000120">
    <property type="entry name" value="Amidase"/>
</dbReference>
<dbReference type="InterPro" id="IPR020556">
    <property type="entry name" value="Amidase_CS"/>
</dbReference>
<dbReference type="InterPro" id="IPR023631">
    <property type="entry name" value="Amidase_dom"/>
</dbReference>
<dbReference type="InterPro" id="IPR036928">
    <property type="entry name" value="AS_sf"/>
</dbReference>
<dbReference type="InterPro" id="IPR004412">
    <property type="entry name" value="GatA"/>
</dbReference>
<dbReference type="NCBIfam" id="TIGR00132">
    <property type="entry name" value="gatA"/>
    <property type="match status" value="1"/>
</dbReference>
<dbReference type="PANTHER" id="PTHR11895:SF151">
    <property type="entry name" value="GLUTAMYL-TRNA(GLN) AMIDOTRANSFERASE SUBUNIT A"/>
    <property type="match status" value="1"/>
</dbReference>
<dbReference type="PANTHER" id="PTHR11895">
    <property type="entry name" value="TRANSAMIDASE"/>
    <property type="match status" value="1"/>
</dbReference>
<dbReference type="Pfam" id="PF01425">
    <property type="entry name" value="Amidase"/>
    <property type="match status" value="1"/>
</dbReference>
<dbReference type="SUPFAM" id="SSF75304">
    <property type="entry name" value="Amidase signature (AS) enzymes"/>
    <property type="match status" value="1"/>
</dbReference>
<dbReference type="PROSITE" id="PS00571">
    <property type="entry name" value="AMIDASES"/>
    <property type="match status" value="1"/>
</dbReference>
<proteinExistence type="inferred from homology"/>
<accession>B7JMB2</accession>
<evidence type="ECO:0000255" key="1">
    <source>
        <dbReference type="HAMAP-Rule" id="MF_00120"/>
    </source>
</evidence>
<sequence length="485" mass="52321">MSLFDHSVSELHKKLNNKEISVTDLVEESYKRIADVEDNVKAFLTLDEENARAKAKELDAKIGAEDNGLLFGMPIGVKDNIVTNGLRTTCASKILANFDPIYDATVVQKLKAADTITIGKLNMDEFAMGSSNENSGFYATKNPWNLDYVPGGSSGGSAAAVAAGEVLFSLGSDTGGSIRQPAAYCGVVGLKPTYGRVSRYGLVAFASSLDQIGPITRTVEDNAYLLQAISGLDRMDATSANVEVGNYLAGLTGDVKGLRIAVPKEYLGEGVGEEARESVLAALKVLEGMGATWEEVSLPHSKYALATYYLLSSSEASANLSRFDGVRYGVRSDNVNNLMDLYKNTRSEGFGDEVKRRIMLGTFALSSGYYDAYYKKAQQVRTLIKNDFENVFANYDVIIGPTTPTPAFKVGEKVDDPMTMYANDILTIPVNLAGVPAISVPCGFGANNMPLGLQIIGKHFDEATIYRVAHAFEQATDYHTKKASL</sequence>
<keyword id="KW-0067">ATP-binding</keyword>
<keyword id="KW-0436">Ligase</keyword>
<keyword id="KW-0547">Nucleotide-binding</keyword>
<keyword id="KW-0648">Protein biosynthesis</keyword>
<gene>
    <name evidence="1" type="primary">gatA</name>
    <name type="ordered locus">BCAH820_0353</name>
</gene>
<comment type="function">
    <text evidence="1">Allows the formation of correctly charged Gln-tRNA(Gln) through the transamidation of misacylated Glu-tRNA(Gln) in organisms which lack glutaminyl-tRNA synthetase. The reaction takes place in the presence of glutamine and ATP through an activated gamma-phospho-Glu-tRNA(Gln).</text>
</comment>
<comment type="catalytic activity">
    <reaction evidence="1">
        <text>L-glutamyl-tRNA(Gln) + L-glutamine + ATP + H2O = L-glutaminyl-tRNA(Gln) + L-glutamate + ADP + phosphate + H(+)</text>
        <dbReference type="Rhea" id="RHEA:17521"/>
        <dbReference type="Rhea" id="RHEA-COMP:9681"/>
        <dbReference type="Rhea" id="RHEA-COMP:9684"/>
        <dbReference type="ChEBI" id="CHEBI:15377"/>
        <dbReference type="ChEBI" id="CHEBI:15378"/>
        <dbReference type="ChEBI" id="CHEBI:29985"/>
        <dbReference type="ChEBI" id="CHEBI:30616"/>
        <dbReference type="ChEBI" id="CHEBI:43474"/>
        <dbReference type="ChEBI" id="CHEBI:58359"/>
        <dbReference type="ChEBI" id="CHEBI:78520"/>
        <dbReference type="ChEBI" id="CHEBI:78521"/>
        <dbReference type="ChEBI" id="CHEBI:456216"/>
        <dbReference type="EC" id="6.3.5.7"/>
    </reaction>
</comment>
<comment type="subunit">
    <text evidence="1">Heterotrimer of A, B and C subunits.</text>
</comment>
<comment type="similarity">
    <text evidence="1">Belongs to the amidase family. GatA subfamily.</text>
</comment>